<evidence type="ECO:0000255" key="1"/>
<evidence type="ECO:0000305" key="2"/>
<organismHost>
    <name type="scientific">Orgyia pseudotsugata</name>
    <name type="common">Douglas-fir tussock moth</name>
    <dbReference type="NCBI Taxonomy" id="33414"/>
</organismHost>
<sequence length="354" mass="39834">MSVIDVHIRIDSLRRLIDENMQMEIWPQLLRMCSDTVSDVDVDTSALMAFLVTVARKSQTAFANANAATASAFAAGGARAPAAMPAPAPPAQTVFGALVSAPSAEPALVDMRRYRAAARRLIQYYSLNTTTSSEFKVRDVVMTMIFLQRSENYHQLFKLLDTAMDDFTCRPQLTEAQVSTLLHTLRTLLEMPTTPIDMTTVDVMRSSFARCFASPVLRYAKVVLLQGETVSRDERTTLEELLVERGDNIQKLQPQQYVASGSEIPFCDDPEFINRLLKHLDPYPLSRMYYNAANSMFYTTMENYAVANCKFNIEDYNRIFKGAESIKKHANKTAEDSDELDIYLGTTAKRKKII</sequence>
<name>C42_NPVOP</name>
<feature type="chain" id="PRO_0000133035" description="Protein C42">
    <location>
        <begin position="1"/>
        <end position="354"/>
    </location>
</feature>
<feature type="short sequence motif" description="Nuclear localization signal" evidence="1">
    <location>
        <begin position="349"/>
        <end position="352"/>
    </location>
</feature>
<organism>
    <name type="scientific">Orgyia pseudotsugata multicapsid polyhedrosis virus</name>
    <name type="common">OpMNPV</name>
    <dbReference type="NCBI Taxonomy" id="262177"/>
    <lineage>
        <taxon>Viruses</taxon>
        <taxon>Viruses incertae sedis</taxon>
        <taxon>Naldaviricetes</taxon>
        <taxon>Lefavirales</taxon>
        <taxon>Baculoviridae</taxon>
        <taxon>Alphabaculovirus</taxon>
        <taxon>Alphabaculovirus orpseudotsugatae</taxon>
    </lineage>
</organism>
<reference key="1">
    <citation type="journal article" date="1990" name="J. Gen. Virol.">
        <title>The p6.5 gene region of a nuclear polyhedrosis virus of Orgyia pseudotsugata: DNA sequence and transcriptional analysis of four late genes.</title>
        <authorList>
            <person name="Russell R.L.Q."/>
            <person name="Rohrmann G.F."/>
        </authorList>
    </citation>
    <scope>NUCLEOTIDE SEQUENCE [GENOMIC DNA]</scope>
</reference>
<reference key="2">
    <citation type="journal article" date="1997" name="Virology">
        <title>The sequence of the Orgyia pseudotsugata multinucleocapsid nuclear polyhedrosis virus genome.</title>
        <authorList>
            <person name="Ahrens C.H."/>
            <person name="Russell R.R."/>
            <person name="Funk C.J."/>
            <person name="Evans J."/>
            <person name="Harwood S."/>
            <person name="Rohrmann G.F."/>
        </authorList>
    </citation>
    <scope>NUCLEOTIDE SEQUENCE [LARGE SCALE GENOMIC DNA]</scope>
</reference>
<accession>P24653</accession>
<gene>
    <name type="ORF">ORF102</name>
</gene>
<protein>
    <recommendedName>
        <fullName>Protein C42</fullName>
        <shortName>C42</shortName>
    </recommendedName>
    <alternativeName>
        <fullName>ORF3</fullName>
    </alternativeName>
    <alternativeName>
        <fullName>P40</fullName>
    </alternativeName>
</protein>
<proteinExistence type="inferred from homology"/>
<dbReference type="EMBL" id="D13959">
    <property type="protein sequence ID" value="BAA03058.1"/>
    <property type="molecule type" value="Genomic_DNA"/>
</dbReference>
<dbReference type="EMBL" id="U75930">
    <property type="protein sequence ID" value="AAC59101.1"/>
    <property type="molecule type" value="Genomic_DNA"/>
</dbReference>
<dbReference type="PIR" id="C34526">
    <property type="entry name" value="C34526"/>
</dbReference>
<dbReference type="RefSeq" id="NP_046258.1">
    <property type="nucleotide sequence ID" value="NC_001875.2"/>
</dbReference>
<dbReference type="SMR" id="P24653"/>
<dbReference type="KEGG" id="vg:911972"/>
<dbReference type="OrthoDB" id="7368at10239"/>
<dbReference type="Proteomes" id="UP000009248">
    <property type="component" value="Genome"/>
</dbReference>
<dbReference type="GO" id="GO:0042025">
    <property type="term" value="C:host cell nucleus"/>
    <property type="evidence" value="ECO:0007669"/>
    <property type="project" value="UniProtKB-SubCell"/>
</dbReference>
<dbReference type="InterPro" id="IPR008562">
    <property type="entry name" value="AcMNPV_C42"/>
</dbReference>
<dbReference type="Pfam" id="PF05815">
    <property type="entry name" value="AcMNPV_Orf101"/>
    <property type="match status" value="1"/>
</dbReference>
<comment type="subcellular location">
    <subcellularLocation>
        <location evidence="2">Host nucleus</location>
    </subcellularLocation>
</comment>
<comment type="similarity">
    <text evidence="2">Belongs to the baculoviridae C42 protein family.</text>
</comment>
<keyword id="KW-1048">Host nucleus</keyword>
<keyword id="KW-0426">Late protein</keyword>
<keyword id="KW-1185">Reference proteome</keyword>